<proteinExistence type="inferred from homology"/>
<protein>
    <recommendedName>
        <fullName evidence="1">DNA-directed RNA polymerase subunit beta</fullName>
        <shortName evidence="1">RNAP subunit beta</shortName>
        <ecNumber evidence="1">2.7.7.6</ecNumber>
    </recommendedName>
    <alternativeName>
        <fullName evidence="1">RNA polymerase subunit beta</fullName>
    </alternativeName>
    <alternativeName>
        <fullName evidence="1">Transcriptase subunit beta</fullName>
    </alternativeName>
</protein>
<reference key="1">
    <citation type="journal article" date="2004" name="Nat. Biotechnol.">
        <title>The genome sequence of the extreme thermophile Thermus thermophilus.</title>
        <authorList>
            <person name="Henne A."/>
            <person name="Brueggemann H."/>
            <person name="Raasch C."/>
            <person name="Wiezer A."/>
            <person name="Hartsch T."/>
            <person name="Liesegang H."/>
            <person name="Johann A."/>
            <person name="Lienard T."/>
            <person name="Gohl O."/>
            <person name="Martinez-Arias R."/>
            <person name="Jacobi C."/>
            <person name="Starkuviene V."/>
            <person name="Schlenczeck S."/>
            <person name="Dencker S."/>
            <person name="Huber R."/>
            <person name="Klenk H.-P."/>
            <person name="Kramer W."/>
            <person name="Merkl R."/>
            <person name="Gottschalk G."/>
            <person name="Fritz H.-J."/>
        </authorList>
    </citation>
    <scope>NUCLEOTIDE SEQUENCE [LARGE SCALE GENOMIC DNA]</scope>
    <source>
        <strain>ATCC BAA-163 / DSM 7039 / HB27</strain>
    </source>
</reference>
<sequence>MEIKRFGRIREVIPLPPLTEIQVESYRRALQADVPPEKRENVGIQAAFRETFPIEEEDKGKGGLVLDFLEYRLGEPPFPQDECREKDLTYQAPLYARLQLIHKDTGLIKEDEVFLGHIPLMTEDGSFIINGADRVIVSQIHRSPGVYFTPDPARPGRYIASIIPLPKRGPWIDLEVEPNGVVSMKVNKRKFPLVLLLRVLGYDQETLARELGAYGELVQGLMDESVFAMRPEEALIRLFTLLRPGDPPKRDKAVAYVYGLIADPRRYDLGEAGRYKAEEKLGIRLSGRTLARFEDGEFKDEVFLPTLRYLFALTAGVPGHEVDDIDHLGNRRIRTVGELMTDQFRVGLARLARGVRERMLMGSEDSLTPAKLVNSRPLEAAIREFFSRSQLSQFKDETNPLSSLRHKRRISALGPGGLTRERAGFDVRDVHRTHYGRICPVETPEGANIGLITSLAAYARVDELGFIRTPYRRVVGGVVTDEVVYMTATEEDRYTIAQANTPLEGNRIAAERVVARRKGEPVIVSPEEVEFMDVSPKQVFSVNTNLIPFLEHDDANRALMGSNMQTQAVPLIRAQAPVVMTGLEERVVRDSLAALYAEEDGEVAKVDGNRIVVRYEDGRLVEYPLRRFYRSNQGTALDQRPRVVVGQRVRKGDLLADGPASENGFLALGQNVLVAIMPFDGYNFEDAIVISEELLKRDFYTSIHIERYEIEARDTKLGPERITRDIPHLSEAALRDLDEEGVVRIGAEVKPGDILVGRTSFKGESEPTPEERLLRSIFGEKARDVKDTSLRVPPGEGGIVVRTVRLRRGDPGVELKPGVREVVRVYVAQKRKLQVGDKLANRHGNKGVVAKILPVEDMPHLPDGTPVDVILNPLGVPSRMNLGQILETHLGLAGYFLGQRYISPIFDGAKEPEIKELLAQAFEVYFGKRKGEGFGVDKREVEVLRRAEKLGLVTPGKPPEEQLKELFLQGKVVLYDGRTGEPIEGPIVVGQMFIMKLYHMVEDKMHARSTGPYSLITQQPLGGKAQFGGQRFGEMEVWALEAYGAAHTLQEMLTLKSDDIEGRNAAYEAIIKGEDVPEPSVPESFRVLVKELQALALDVQTLDEKDNPVDIFEGLASKR</sequence>
<accession>Q72HM5</accession>
<feature type="chain" id="PRO_0000224116" description="DNA-directed RNA polymerase subunit beta">
    <location>
        <begin position="1"/>
        <end position="1119"/>
    </location>
</feature>
<gene>
    <name evidence="1" type="primary">rpoB</name>
    <name type="ordered locus">TT_C1461</name>
</gene>
<organism>
    <name type="scientific">Thermus thermophilus (strain ATCC BAA-163 / DSM 7039 / HB27)</name>
    <dbReference type="NCBI Taxonomy" id="262724"/>
    <lineage>
        <taxon>Bacteria</taxon>
        <taxon>Thermotogati</taxon>
        <taxon>Deinococcota</taxon>
        <taxon>Deinococci</taxon>
        <taxon>Thermales</taxon>
        <taxon>Thermaceae</taxon>
        <taxon>Thermus</taxon>
    </lineage>
</organism>
<comment type="function">
    <text evidence="1">DNA-dependent RNA polymerase catalyzes the transcription of DNA into RNA using the four ribonucleoside triphosphates as substrates.</text>
</comment>
<comment type="catalytic activity">
    <reaction evidence="1">
        <text>RNA(n) + a ribonucleoside 5'-triphosphate = RNA(n+1) + diphosphate</text>
        <dbReference type="Rhea" id="RHEA:21248"/>
        <dbReference type="Rhea" id="RHEA-COMP:14527"/>
        <dbReference type="Rhea" id="RHEA-COMP:17342"/>
        <dbReference type="ChEBI" id="CHEBI:33019"/>
        <dbReference type="ChEBI" id="CHEBI:61557"/>
        <dbReference type="ChEBI" id="CHEBI:140395"/>
        <dbReference type="EC" id="2.7.7.6"/>
    </reaction>
</comment>
<comment type="subunit">
    <text evidence="1">The RNAP catalytic core consists of 2 alpha, 1 beta, 1 beta' and 1 omega subunit. When a sigma factor is associated with the core the holoenzyme is formed, which can initiate transcription.</text>
</comment>
<comment type="similarity">
    <text evidence="1">Belongs to the RNA polymerase beta chain family.</text>
</comment>
<keyword id="KW-0240">DNA-directed RNA polymerase</keyword>
<keyword id="KW-0548">Nucleotidyltransferase</keyword>
<keyword id="KW-0804">Transcription</keyword>
<keyword id="KW-0808">Transferase</keyword>
<dbReference type="EC" id="2.7.7.6" evidence="1"/>
<dbReference type="EMBL" id="AE017221">
    <property type="protein sequence ID" value="AAS81803.1"/>
    <property type="molecule type" value="Genomic_DNA"/>
</dbReference>
<dbReference type="RefSeq" id="WP_011173837.1">
    <property type="nucleotide sequence ID" value="NC_005835.1"/>
</dbReference>
<dbReference type="SMR" id="Q72HM5"/>
<dbReference type="KEGG" id="tth:TT_C1461"/>
<dbReference type="eggNOG" id="COG0085">
    <property type="taxonomic scope" value="Bacteria"/>
</dbReference>
<dbReference type="HOGENOM" id="CLU_000524_4_1_0"/>
<dbReference type="OrthoDB" id="9803954at2"/>
<dbReference type="Proteomes" id="UP000000592">
    <property type="component" value="Chromosome"/>
</dbReference>
<dbReference type="GO" id="GO:0000428">
    <property type="term" value="C:DNA-directed RNA polymerase complex"/>
    <property type="evidence" value="ECO:0007669"/>
    <property type="project" value="UniProtKB-KW"/>
</dbReference>
<dbReference type="GO" id="GO:0003677">
    <property type="term" value="F:DNA binding"/>
    <property type="evidence" value="ECO:0007669"/>
    <property type="project" value="UniProtKB-UniRule"/>
</dbReference>
<dbReference type="GO" id="GO:0003899">
    <property type="term" value="F:DNA-directed RNA polymerase activity"/>
    <property type="evidence" value="ECO:0007669"/>
    <property type="project" value="UniProtKB-UniRule"/>
</dbReference>
<dbReference type="GO" id="GO:0032549">
    <property type="term" value="F:ribonucleoside binding"/>
    <property type="evidence" value="ECO:0007669"/>
    <property type="project" value="InterPro"/>
</dbReference>
<dbReference type="GO" id="GO:0006351">
    <property type="term" value="P:DNA-templated transcription"/>
    <property type="evidence" value="ECO:0007669"/>
    <property type="project" value="UniProtKB-UniRule"/>
</dbReference>
<dbReference type="CDD" id="cd00653">
    <property type="entry name" value="RNA_pol_B_RPB2"/>
    <property type="match status" value="1"/>
</dbReference>
<dbReference type="FunFam" id="3.90.1800.10:FF:000001">
    <property type="entry name" value="DNA-directed RNA polymerase subunit beta"/>
    <property type="match status" value="1"/>
</dbReference>
<dbReference type="Gene3D" id="2.40.50.100">
    <property type="match status" value="1"/>
</dbReference>
<dbReference type="Gene3D" id="2.40.50.150">
    <property type="match status" value="1"/>
</dbReference>
<dbReference type="Gene3D" id="3.90.1100.10">
    <property type="match status" value="1"/>
</dbReference>
<dbReference type="Gene3D" id="2.30.150.10">
    <property type="entry name" value="DNA-directed RNA polymerase, beta subunit, external 1 domain"/>
    <property type="match status" value="1"/>
</dbReference>
<dbReference type="Gene3D" id="2.40.270.10">
    <property type="entry name" value="DNA-directed RNA polymerase, subunit 2, domain 6"/>
    <property type="match status" value="1"/>
</dbReference>
<dbReference type="Gene3D" id="3.90.1800.10">
    <property type="entry name" value="RNA polymerase alpha subunit dimerisation domain"/>
    <property type="match status" value="1"/>
</dbReference>
<dbReference type="Gene3D" id="3.90.1110.10">
    <property type="entry name" value="RNA polymerase Rpb2, domain 2"/>
    <property type="match status" value="1"/>
</dbReference>
<dbReference type="HAMAP" id="MF_01321">
    <property type="entry name" value="RNApol_bact_RpoB"/>
    <property type="match status" value="1"/>
</dbReference>
<dbReference type="InterPro" id="IPR042107">
    <property type="entry name" value="DNA-dir_RNA_pol_bsu_ext_1_sf"/>
</dbReference>
<dbReference type="InterPro" id="IPR019462">
    <property type="entry name" value="DNA-dir_RNA_pol_bsu_external_1"/>
</dbReference>
<dbReference type="InterPro" id="IPR015712">
    <property type="entry name" value="DNA-dir_RNA_pol_su2"/>
</dbReference>
<dbReference type="InterPro" id="IPR007120">
    <property type="entry name" value="DNA-dir_RNAP_su2_dom"/>
</dbReference>
<dbReference type="InterPro" id="IPR037033">
    <property type="entry name" value="DNA-dir_RNAP_su2_hyb_sf"/>
</dbReference>
<dbReference type="InterPro" id="IPR010243">
    <property type="entry name" value="RNA_pol_bsu_bac"/>
</dbReference>
<dbReference type="InterPro" id="IPR007121">
    <property type="entry name" value="RNA_pol_bsu_CS"/>
</dbReference>
<dbReference type="InterPro" id="IPR007644">
    <property type="entry name" value="RNA_pol_bsu_protrusion"/>
</dbReference>
<dbReference type="InterPro" id="IPR007642">
    <property type="entry name" value="RNA_pol_Rpb2_2"/>
</dbReference>
<dbReference type="InterPro" id="IPR037034">
    <property type="entry name" value="RNA_pol_Rpb2_2_sf"/>
</dbReference>
<dbReference type="InterPro" id="IPR007645">
    <property type="entry name" value="RNA_pol_Rpb2_3"/>
</dbReference>
<dbReference type="InterPro" id="IPR007641">
    <property type="entry name" value="RNA_pol_Rpb2_7"/>
</dbReference>
<dbReference type="InterPro" id="IPR014724">
    <property type="entry name" value="RNA_pol_RPB2_OB-fold"/>
</dbReference>
<dbReference type="NCBIfam" id="NF001616">
    <property type="entry name" value="PRK00405.1"/>
    <property type="match status" value="1"/>
</dbReference>
<dbReference type="NCBIfam" id="TIGR02013">
    <property type="entry name" value="rpoB"/>
    <property type="match status" value="1"/>
</dbReference>
<dbReference type="PANTHER" id="PTHR20856">
    <property type="entry name" value="DNA-DIRECTED RNA POLYMERASE I SUBUNIT 2"/>
    <property type="match status" value="1"/>
</dbReference>
<dbReference type="Pfam" id="PF04563">
    <property type="entry name" value="RNA_pol_Rpb2_1"/>
    <property type="match status" value="1"/>
</dbReference>
<dbReference type="Pfam" id="PF04561">
    <property type="entry name" value="RNA_pol_Rpb2_2"/>
    <property type="match status" value="1"/>
</dbReference>
<dbReference type="Pfam" id="PF04565">
    <property type="entry name" value="RNA_pol_Rpb2_3"/>
    <property type="match status" value="1"/>
</dbReference>
<dbReference type="Pfam" id="PF10385">
    <property type="entry name" value="RNA_pol_Rpb2_45"/>
    <property type="match status" value="1"/>
</dbReference>
<dbReference type="Pfam" id="PF00562">
    <property type="entry name" value="RNA_pol_Rpb2_6"/>
    <property type="match status" value="1"/>
</dbReference>
<dbReference type="Pfam" id="PF04560">
    <property type="entry name" value="RNA_pol_Rpb2_7"/>
    <property type="match status" value="1"/>
</dbReference>
<dbReference type="SUPFAM" id="SSF64484">
    <property type="entry name" value="beta and beta-prime subunits of DNA dependent RNA-polymerase"/>
    <property type="match status" value="1"/>
</dbReference>
<dbReference type="PROSITE" id="PS01166">
    <property type="entry name" value="RNA_POL_BETA"/>
    <property type="match status" value="1"/>
</dbReference>
<evidence type="ECO:0000255" key="1">
    <source>
        <dbReference type="HAMAP-Rule" id="MF_01321"/>
    </source>
</evidence>
<name>RPOB_THET2</name>